<proteinExistence type="inferred from homology"/>
<accession>A9MHG9</accession>
<keyword id="KW-0963">Cytoplasm</keyword>
<keyword id="KW-0238">DNA-binding</keyword>
<keyword id="KW-0275">Fatty acid biosynthesis</keyword>
<keyword id="KW-0276">Fatty acid metabolism</keyword>
<keyword id="KW-0444">Lipid biosynthesis</keyword>
<keyword id="KW-0443">Lipid metabolism</keyword>
<keyword id="KW-1185">Reference proteome</keyword>
<keyword id="KW-0678">Repressor</keyword>
<keyword id="KW-0804">Transcription</keyword>
<keyword id="KW-0805">Transcription regulation</keyword>
<protein>
    <recommendedName>
        <fullName evidence="1">HTH-type transcriptional repressor FabR</fullName>
    </recommendedName>
</protein>
<comment type="function">
    <text evidence="1">Represses the transcription of fabB, involved in unsaturated fatty acid (UFA) biosynthesis. By controlling UFA production, FabR directly influences the physical properties of the membrane bilayer.</text>
</comment>
<comment type="subunit">
    <text evidence="1">Homodimer.</text>
</comment>
<comment type="subcellular location">
    <subcellularLocation>
        <location evidence="1">Cytoplasm</location>
    </subcellularLocation>
</comment>
<name>FABR_SALAR</name>
<organism>
    <name type="scientific">Salmonella arizonae (strain ATCC BAA-731 / CDC346-86 / RSK2980)</name>
    <dbReference type="NCBI Taxonomy" id="41514"/>
    <lineage>
        <taxon>Bacteria</taxon>
        <taxon>Pseudomonadati</taxon>
        <taxon>Pseudomonadota</taxon>
        <taxon>Gammaproteobacteria</taxon>
        <taxon>Enterobacterales</taxon>
        <taxon>Enterobacteriaceae</taxon>
        <taxon>Salmonella</taxon>
    </lineage>
</organism>
<feature type="chain" id="PRO_1000085471" description="HTH-type transcriptional repressor FabR">
    <location>
        <begin position="1"/>
        <end position="210"/>
    </location>
</feature>
<feature type="domain" description="HTH tetR-type" evidence="1">
    <location>
        <begin position="10"/>
        <end position="70"/>
    </location>
</feature>
<feature type="DNA-binding region" description="H-T-H motif" evidence="1">
    <location>
        <begin position="33"/>
        <end position="52"/>
    </location>
</feature>
<gene>
    <name evidence="1" type="primary">fabR</name>
    <name type="ordered locus">SARI_03536</name>
</gene>
<sequence length="210" mass="23896">MGVRAQQKEKTRRSLVEAAFSQLSAERSFASLSLREVAREAGIAPTSFYRHFRDVDELGLTMVDESGLMLRQLMRQARQRIAKGGSVIRTSVSTFMEFIGNNPNAFRLLLRERSGTSAAFRAAVAREIQHFIAELADYLELENHMPRAFTEAQAEAMVTIVFSAGAEALDVGAEQRRQLEERLVLQLRMIAKGAYYWYRREQEKIAHHSE</sequence>
<dbReference type="EMBL" id="CP000880">
    <property type="protein sequence ID" value="ABX23352.1"/>
    <property type="molecule type" value="Genomic_DNA"/>
</dbReference>
<dbReference type="SMR" id="A9MHG9"/>
<dbReference type="STRING" id="41514.SARI_03536"/>
<dbReference type="KEGG" id="ses:SARI_03536"/>
<dbReference type="HOGENOM" id="CLU_081861_0_0_6"/>
<dbReference type="Proteomes" id="UP000002084">
    <property type="component" value="Chromosome"/>
</dbReference>
<dbReference type="GO" id="GO:0005737">
    <property type="term" value="C:cytoplasm"/>
    <property type="evidence" value="ECO:0007669"/>
    <property type="project" value="UniProtKB-SubCell"/>
</dbReference>
<dbReference type="GO" id="GO:0003677">
    <property type="term" value="F:DNA binding"/>
    <property type="evidence" value="ECO:0007669"/>
    <property type="project" value="UniProtKB-KW"/>
</dbReference>
<dbReference type="GO" id="GO:0003700">
    <property type="term" value="F:DNA-binding transcription factor activity"/>
    <property type="evidence" value="ECO:0007669"/>
    <property type="project" value="UniProtKB-UniRule"/>
</dbReference>
<dbReference type="GO" id="GO:0006633">
    <property type="term" value="P:fatty acid biosynthetic process"/>
    <property type="evidence" value="ECO:0007669"/>
    <property type="project" value="UniProtKB-UniRule"/>
</dbReference>
<dbReference type="GO" id="GO:0045717">
    <property type="term" value="P:negative regulation of fatty acid biosynthetic process"/>
    <property type="evidence" value="ECO:0007669"/>
    <property type="project" value="UniProtKB-UniRule"/>
</dbReference>
<dbReference type="FunFam" id="1.10.10.60:FF:000034">
    <property type="entry name" value="HTH-type transcriptional repressor FabR"/>
    <property type="match status" value="1"/>
</dbReference>
<dbReference type="FunFam" id="1.10.357.10:FF:000001">
    <property type="entry name" value="HTH-type transcriptional repressor FabR"/>
    <property type="match status" value="1"/>
</dbReference>
<dbReference type="Gene3D" id="1.10.10.60">
    <property type="entry name" value="Homeodomain-like"/>
    <property type="match status" value="1"/>
</dbReference>
<dbReference type="Gene3D" id="1.10.357.10">
    <property type="entry name" value="Tetracycline Repressor, domain 2"/>
    <property type="match status" value="1"/>
</dbReference>
<dbReference type="HAMAP" id="MF_01190">
    <property type="entry name" value="HTH_type_FabR"/>
    <property type="match status" value="1"/>
</dbReference>
<dbReference type="InterPro" id="IPR054129">
    <property type="entry name" value="DesT_TetR_C"/>
</dbReference>
<dbReference type="InterPro" id="IPR009057">
    <property type="entry name" value="Homeodomain-like_sf"/>
</dbReference>
<dbReference type="InterPro" id="IPR001647">
    <property type="entry name" value="HTH_TetR"/>
</dbReference>
<dbReference type="InterPro" id="IPR050692">
    <property type="entry name" value="HTH_transcr_repressor_FabR"/>
</dbReference>
<dbReference type="InterPro" id="IPR023764">
    <property type="entry name" value="Tscrpt_reg_HTH_FabR"/>
</dbReference>
<dbReference type="NCBIfam" id="NF008402">
    <property type="entry name" value="PRK11202.1"/>
    <property type="match status" value="1"/>
</dbReference>
<dbReference type="PANTHER" id="PTHR47752">
    <property type="entry name" value="HTH-TYPE TRANSCRIPTIONAL REPRESSOR FABR"/>
    <property type="match status" value="1"/>
</dbReference>
<dbReference type="PANTHER" id="PTHR47752:SF1">
    <property type="entry name" value="HTH-TYPE TRANSCRIPTIONAL REPRESSOR FABR"/>
    <property type="match status" value="1"/>
</dbReference>
<dbReference type="Pfam" id="PF21943">
    <property type="entry name" value="TetR_C_46"/>
    <property type="match status" value="1"/>
</dbReference>
<dbReference type="Pfam" id="PF00440">
    <property type="entry name" value="TetR_N"/>
    <property type="match status" value="1"/>
</dbReference>
<dbReference type="SUPFAM" id="SSF46689">
    <property type="entry name" value="Homeodomain-like"/>
    <property type="match status" value="1"/>
</dbReference>
<dbReference type="PROSITE" id="PS50977">
    <property type="entry name" value="HTH_TETR_2"/>
    <property type="match status" value="1"/>
</dbReference>
<reference key="1">
    <citation type="submission" date="2007-11" db="EMBL/GenBank/DDBJ databases">
        <authorList>
            <consortium name="The Salmonella enterica serovar Arizonae Genome Sequencing Project"/>
            <person name="McClelland M."/>
            <person name="Sanderson E.K."/>
            <person name="Porwollik S."/>
            <person name="Spieth J."/>
            <person name="Clifton W.S."/>
            <person name="Fulton R."/>
            <person name="Chunyan W."/>
            <person name="Wollam A."/>
            <person name="Shah N."/>
            <person name="Pepin K."/>
            <person name="Bhonagiri V."/>
            <person name="Nash W."/>
            <person name="Johnson M."/>
            <person name="Thiruvilangam P."/>
            <person name="Wilson R."/>
        </authorList>
    </citation>
    <scope>NUCLEOTIDE SEQUENCE [LARGE SCALE GENOMIC DNA]</scope>
    <source>
        <strain>ATCC BAA-731 / CDC346-86 / RSK2980</strain>
    </source>
</reference>
<evidence type="ECO:0000255" key="1">
    <source>
        <dbReference type="HAMAP-Rule" id="MF_01190"/>
    </source>
</evidence>